<sequence>MFTLKKSLLLLFFLGTINLSLCEQERNAEEERRDDSDKRDVEVEKRFLSTLLNVASNVVPTLICKITKKC</sequence>
<keyword id="KW-0878">Amphibian defense peptide</keyword>
<keyword id="KW-0044">Antibiotic</keyword>
<keyword id="KW-0929">Antimicrobial</keyword>
<keyword id="KW-0165">Cleavage on pair of basic residues</keyword>
<keyword id="KW-0204">Cytolysis</keyword>
<keyword id="KW-1015">Disulfide bond</keyword>
<keyword id="KW-0295">Fungicide</keyword>
<keyword id="KW-0354">Hemolysis</keyword>
<keyword id="KW-0964">Secreted</keyword>
<keyword id="KW-0732">Signal</keyword>
<protein>
    <recommendedName>
        <fullName evidence="4">Brevinin-1CG3</fullName>
    </recommendedName>
</protein>
<organism evidence="4">
    <name type="scientific">Amolops chunganensis</name>
    <name type="common">Chungan torrent frog</name>
    <name type="synonym">Hylorana chunganensis</name>
    <dbReference type="NCBI Taxonomy" id="325556"/>
    <lineage>
        <taxon>Eukaryota</taxon>
        <taxon>Metazoa</taxon>
        <taxon>Chordata</taxon>
        <taxon>Craniata</taxon>
        <taxon>Vertebrata</taxon>
        <taxon>Euteleostomi</taxon>
        <taxon>Amphibia</taxon>
        <taxon>Batrachia</taxon>
        <taxon>Anura</taxon>
        <taxon>Neobatrachia</taxon>
        <taxon>Ranoidea</taxon>
        <taxon>Ranidae</taxon>
        <taxon>Amolops</taxon>
    </lineage>
</organism>
<dbReference type="EMBL" id="HQ009828">
    <property type="protein sequence ID" value="ADM34204.1"/>
    <property type="molecule type" value="mRNA"/>
</dbReference>
<dbReference type="GO" id="GO:0005576">
    <property type="term" value="C:extracellular region"/>
    <property type="evidence" value="ECO:0007669"/>
    <property type="project" value="UniProtKB-SubCell"/>
</dbReference>
<dbReference type="GO" id="GO:0042742">
    <property type="term" value="P:defense response to bacterium"/>
    <property type="evidence" value="ECO:0007669"/>
    <property type="project" value="UniProtKB-KW"/>
</dbReference>
<dbReference type="GO" id="GO:0050832">
    <property type="term" value="P:defense response to fungus"/>
    <property type="evidence" value="ECO:0007669"/>
    <property type="project" value="UniProtKB-KW"/>
</dbReference>
<dbReference type="GO" id="GO:0031640">
    <property type="term" value="P:killing of cells of another organism"/>
    <property type="evidence" value="ECO:0007669"/>
    <property type="project" value="UniProtKB-KW"/>
</dbReference>
<dbReference type="InterPro" id="IPR012520">
    <property type="entry name" value="Antimicrobial_frog_1"/>
</dbReference>
<dbReference type="InterPro" id="IPR004275">
    <property type="entry name" value="Frog_antimicrobial_propeptide"/>
</dbReference>
<dbReference type="Pfam" id="PF08018">
    <property type="entry name" value="Antimicrobial_1"/>
    <property type="match status" value="1"/>
</dbReference>
<dbReference type="Pfam" id="PF03032">
    <property type="entry name" value="FSAP_sig_propep"/>
    <property type="match status" value="1"/>
</dbReference>
<feature type="signal peptide" evidence="2">
    <location>
        <begin position="1"/>
        <end position="22"/>
    </location>
</feature>
<feature type="propeptide" id="PRO_0000439728" description="Removed in mature form" evidence="5">
    <location>
        <begin position="23"/>
        <end position="44"/>
    </location>
</feature>
<feature type="peptide" id="PRO_0000439729" description="Brevinin-1CG3" evidence="4">
    <location>
        <begin position="47"/>
        <end position="70"/>
    </location>
</feature>
<feature type="disulfide bond" evidence="1">
    <location>
        <begin position="64"/>
        <end position="70"/>
    </location>
</feature>
<reference evidence="6" key="1">
    <citation type="journal article" date="2012" name="Peptides">
        <title>Characterization of diverse antimicrobial peptides in skin secretions of Chungan torrent frog Amolops chunganensis.</title>
        <authorList>
            <person name="Yang X."/>
            <person name="Xia J."/>
            <person name="Yu Z."/>
            <person name="Hu Y."/>
            <person name="Li F."/>
            <person name="Meng H."/>
            <person name="Yang S."/>
            <person name="Liu J."/>
            <person name="Wang H."/>
        </authorList>
    </citation>
    <scope>NUCLEOTIDE SEQUENCE [MRNA]</scope>
    <scope>FUNCTION</scope>
    <scope>SYNTHESIS</scope>
</reference>
<evidence type="ECO:0000250" key="1">
    <source>
        <dbReference type="UniProtKB" id="P80398"/>
    </source>
</evidence>
<evidence type="ECO:0000255" key="2"/>
<evidence type="ECO:0000269" key="3">
    <source>
    </source>
</evidence>
<evidence type="ECO:0000303" key="4">
    <source>
    </source>
</evidence>
<evidence type="ECO:0000305" key="5">
    <source>
    </source>
</evidence>
<evidence type="ECO:0000312" key="6">
    <source>
        <dbReference type="EMBL" id="ADM34204.1"/>
    </source>
</evidence>
<proteinExistence type="inferred from homology"/>
<accession>E1AWD2</accession>
<comment type="function">
    <text evidence="3">Antimicrobial peptide active against a variety of Gram-positive and some Gram-negative bacterial strains. Has antifungal activity against a slime mold isolate. Has hemolytic activity against human erythrocytes.</text>
</comment>
<comment type="subcellular location">
    <subcellularLocation>
        <location evidence="5">Secreted</location>
    </subcellularLocation>
</comment>
<comment type="tissue specificity">
    <text evidence="5">Expressed by the skin glands.</text>
</comment>
<comment type="similarity">
    <text evidence="2">Belongs to the frog skin active peptide (FSAP) family. Brevinin subfamily.</text>
</comment>
<name>BR13_AMOCU</name>